<gene>
    <name type="primary">cren7</name>
    <name evidence="6" type="ORF">J5U23_02500</name>
</gene>
<evidence type="ECO:0000250" key="1">
    <source>
        <dbReference type="UniProtKB" id="Q97ZE3"/>
    </source>
</evidence>
<evidence type="ECO:0000255" key="2">
    <source>
        <dbReference type="HAMAP-Rule" id="MF_01387"/>
    </source>
</evidence>
<evidence type="ECO:0000269" key="3">
    <source>
    </source>
</evidence>
<evidence type="ECO:0000303" key="4">
    <source>
    </source>
</evidence>
<evidence type="ECO:0000305" key="5"/>
<evidence type="ECO:0000312" key="6">
    <source>
        <dbReference type="EMBL" id="QXJ29627.1"/>
    </source>
</evidence>
<accession>P0C835</accession>
<accession>A0A8F5GUQ5</accession>
<comment type="function">
    <text evidence="1 3">A chromatin protein, binds double-stranded DNA without sequence specificity (PubMed:18096617). Constrains negative DNA supercoils (By similarity).</text>
</comment>
<comment type="subunit">
    <text evidence="2">Monomer.</text>
</comment>
<comment type="subcellular location">
    <subcellularLocation>
        <location evidence="1 2">Chromosome</location>
    </subcellularLocation>
    <subcellularLocation>
        <location evidence="1 2">Cytoplasm</location>
    </subcellularLocation>
</comment>
<comment type="PTM">
    <text evidence="3">Methylated at multiple sites, to varying extents (PubMed:18096617). At least one methylation occurs on Lys-16 (PubMed:18096617).</text>
</comment>
<comment type="similarity">
    <text evidence="2 5">Belongs to the Cren7 family.</text>
</comment>
<name>CREN7_SACSH</name>
<reference evidence="6" key="1">
    <citation type="journal article" date="2021" name="Environ. Microbiol.">
        <title>New insights into the diversity and evolution of the archaeal mobilome from three complete genomes of Saccharolobus shibatae.</title>
        <authorList>
            <person name="Medvedeva S."/>
            <person name="Brandt D."/>
            <person name="Cvirkaite-Krupovic V."/>
            <person name="Liu Y."/>
            <person name="Severinov K."/>
            <person name="Ishino S."/>
            <person name="Ishino Y."/>
            <person name="Prangishvili D."/>
            <person name="Kalinowski J."/>
            <person name="Krupovic M."/>
        </authorList>
    </citation>
    <scope>NUCLEOTIDE SEQUENCE [LARGE SCALE GENOMIC DNA]</scope>
    <source>
        <strain>ATCC 51178 / DSM 5389 / JCM 8931 / NBRC 15437 / B12</strain>
    </source>
</reference>
<reference key="2">
    <citation type="journal article" date="2008" name="Nucleic Acids Res.">
        <title>Biochemical and structural characterization of Cren7, a novel chromatin protein conserved among Crenarchaea.</title>
        <authorList>
            <person name="Guo L."/>
            <person name="Feng Y."/>
            <person name="Zhang Z."/>
            <person name="Yao H."/>
            <person name="Luo Y."/>
            <person name="Wang J."/>
            <person name="Huang L."/>
        </authorList>
    </citation>
    <scope>PROTEIN SEQUENCE OF N-TERMINUS</scope>
    <scope>IDENTIFICATION BY MASS SPECTROMETRY</scope>
    <scope>FUNCTION</scope>
    <scope>METHYLATION AT LYS-16</scope>
    <source>
        <strain>ATCC 51178 / DSM 5389 / JCM 8931 / NBRC 15437 / B12</strain>
    </source>
</reference>
<keyword id="KW-0158">Chromosome</keyword>
<keyword id="KW-0963">Cytoplasm</keyword>
<keyword id="KW-0903">Direct protein sequencing</keyword>
<keyword id="KW-0238">DNA-binding</keyword>
<keyword id="KW-0488">Methylation</keyword>
<proteinExistence type="evidence at protein level"/>
<protein>
    <recommendedName>
        <fullName evidence="2 4">Chromatin protein Cren7</fullName>
    </recommendedName>
</protein>
<sequence>MSSGKKAVKVKTPAGKEAELVPEKVWALAPKGRKGVKIGLFKDPETGKYFRHKLPDDYPI</sequence>
<dbReference type="EMBL" id="CP077717">
    <property type="protein sequence ID" value="QXJ29627.1"/>
    <property type="molecule type" value="Genomic_DNA"/>
</dbReference>
<dbReference type="RefSeq" id="WP_012711256.1">
    <property type="nucleotide sequence ID" value="NZ_CP077717.1"/>
</dbReference>
<dbReference type="SMR" id="P0C835"/>
<dbReference type="iPTMnet" id="P0C835"/>
<dbReference type="GeneID" id="84061563"/>
<dbReference type="KEGG" id="sshi:J5U23_02500"/>
<dbReference type="OrthoDB" id="38142at2157"/>
<dbReference type="Proteomes" id="UP000694018">
    <property type="component" value="Chromosome"/>
</dbReference>
<dbReference type="GO" id="GO:0005694">
    <property type="term" value="C:chromosome"/>
    <property type="evidence" value="ECO:0007669"/>
    <property type="project" value="UniProtKB-SubCell"/>
</dbReference>
<dbReference type="GO" id="GO:0005737">
    <property type="term" value="C:cytoplasm"/>
    <property type="evidence" value="ECO:0007669"/>
    <property type="project" value="UniProtKB-SubCell"/>
</dbReference>
<dbReference type="GO" id="GO:0003690">
    <property type="term" value="F:double-stranded DNA binding"/>
    <property type="evidence" value="ECO:0007669"/>
    <property type="project" value="UniProtKB-UniRule"/>
</dbReference>
<dbReference type="Gene3D" id="2.30.30.610">
    <property type="entry name" value="Chromatin protein Cren7"/>
    <property type="match status" value="1"/>
</dbReference>
<dbReference type="HAMAP" id="MF_01387">
    <property type="entry name" value="Chromatin_Cren7"/>
    <property type="match status" value="1"/>
</dbReference>
<dbReference type="InterPro" id="IPR038647">
    <property type="entry name" value="Cren7_sf"/>
</dbReference>
<dbReference type="InterPro" id="IPR020906">
    <property type="entry name" value="dsDNA-bd_Cren7"/>
</dbReference>
<dbReference type="Pfam" id="PF11520">
    <property type="entry name" value="Cren7"/>
    <property type="match status" value="1"/>
</dbReference>
<feature type="initiator methionine" description="Removed" evidence="3">
    <location>
        <position position="1"/>
    </location>
</feature>
<feature type="chain" id="PRO_0000345177" description="Chromatin protein Cren7">
    <location>
        <begin position="2"/>
        <end position="60"/>
    </location>
</feature>
<feature type="modified residue" description="N6-methyllysine" evidence="3">
    <location>
        <position position="16"/>
    </location>
</feature>
<organism>
    <name type="scientific">Saccharolobus shibatae (strain ATCC 51178 / DSM 5389 / JCM 8931 / NBRC 15437 / B12)</name>
    <name type="common">Sulfolobus shibatae</name>
    <dbReference type="NCBI Taxonomy" id="523848"/>
    <lineage>
        <taxon>Archaea</taxon>
        <taxon>Thermoproteota</taxon>
        <taxon>Thermoprotei</taxon>
        <taxon>Sulfolobales</taxon>
        <taxon>Sulfolobaceae</taxon>
        <taxon>Saccharolobus</taxon>
    </lineage>
</organism>